<feature type="signal peptide" evidence="1">
    <location>
        <begin position="1"/>
        <end position="25"/>
    </location>
</feature>
<feature type="chain" id="PRO_0000018280" description="Outer-membrane lipoprotein carrier protein">
    <location>
        <begin position="26"/>
        <end position="208"/>
    </location>
</feature>
<comment type="function">
    <text evidence="1">Participates in the translocation of lipoproteins from the inner membrane to the outer membrane. Only forms a complex with a lipoprotein if the residue after the N-terminal Cys is not an aspartate (The Asp acts as a targeting signal to indicate that the lipoprotein should stay in the inner membrane).</text>
</comment>
<comment type="subunit">
    <text evidence="1">Monomer.</text>
</comment>
<comment type="subcellular location">
    <subcellularLocation>
        <location evidence="1">Periplasm</location>
    </subcellularLocation>
</comment>
<comment type="similarity">
    <text evidence="1">Belongs to the LolA family.</text>
</comment>
<reference key="1">
    <citation type="journal article" date="2003" name="Lancet">
        <title>Genome sequence of Vibrio parahaemolyticus: a pathogenic mechanism distinct from that of V. cholerae.</title>
        <authorList>
            <person name="Makino K."/>
            <person name="Oshima K."/>
            <person name="Kurokawa K."/>
            <person name="Yokoyama K."/>
            <person name="Uda T."/>
            <person name="Tagomori K."/>
            <person name="Iijima Y."/>
            <person name="Najima M."/>
            <person name="Nakano M."/>
            <person name="Yamashita A."/>
            <person name="Kubota Y."/>
            <person name="Kimura S."/>
            <person name="Yasunaga T."/>
            <person name="Honda T."/>
            <person name="Shinagawa H."/>
            <person name="Hattori M."/>
            <person name="Iida T."/>
        </authorList>
    </citation>
    <scope>NUCLEOTIDE SEQUENCE [LARGE SCALE GENOMIC DNA]</scope>
    <source>
        <strain>RIMD 2210633</strain>
    </source>
</reference>
<organism>
    <name type="scientific">Vibrio parahaemolyticus serotype O3:K6 (strain RIMD 2210633)</name>
    <dbReference type="NCBI Taxonomy" id="223926"/>
    <lineage>
        <taxon>Bacteria</taxon>
        <taxon>Pseudomonadati</taxon>
        <taxon>Pseudomonadota</taxon>
        <taxon>Gammaproteobacteria</taxon>
        <taxon>Vibrionales</taxon>
        <taxon>Vibrionaceae</taxon>
        <taxon>Vibrio</taxon>
    </lineage>
</organism>
<gene>
    <name evidence="1" type="primary">lolA</name>
    <name type="ordered locus">VP1106</name>
</gene>
<accession>Q87QP3</accession>
<proteinExistence type="inferred from homology"/>
<name>LOLA_VIBPA</name>
<evidence type="ECO:0000255" key="1">
    <source>
        <dbReference type="HAMAP-Rule" id="MF_00240"/>
    </source>
</evidence>
<sequence>MKKRFSAKLFSALVLSISFFSAANAASPKDELNKRLAMNEGFSADFSQQVISPEGETVMEGEGTVEIARPSLFRWSTTFPDENLLVSDGKTLWYYSPFIEQVSIYWQEQATEQTPFVLLTRNRASDWDNYKISQKGNEFTLIPTAVDSTQGQFQINIDAKGVVKGFNVIEQDGQKGLFTFSNVKLGKPKADRFTFTVPKGVEVDDQRN</sequence>
<dbReference type="EMBL" id="BA000031">
    <property type="protein sequence ID" value="BAC59369.1"/>
    <property type="molecule type" value="Genomic_DNA"/>
</dbReference>
<dbReference type="RefSeq" id="NP_797485.1">
    <property type="nucleotide sequence ID" value="NC_004603.1"/>
</dbReference>
<dbReference type="RefSeq" id="WP_005460060.1">
    <property type="nucleotide sequence ID" value="NC_004603.1"/>
</dbReference>
<dbReference type="SMR" id="Q87QP3"/>
<dbReference type="GeneID" id="1188611"/>
<dbReference type="KEGG" id="vpa:VP1106"/>
<dbReference type="PATRIC" id="fig|223926.6.peg.1048"/>
<dbReference type="eggNOG" id="COG2834">
    <property type="taxonomic scope" value="Bacteria"/>
</dbReference>
<dbReference type="HOGENOM" id="CLU_087560_1_1_6"/>
<dbReference type="Proteomes" id="UP000002493">
    <property type="component" value="Chromosome 1"/>
</dbReference>
<dbReference type="GO" id="GO:0030288">
    <property type="term" value="C:outer membrane-bounded periplasmic space"/>
    <property type="evidence" value="ECO:0007669"/>
    <property type="project" value="TreeGrafter"/>
</dbReference>
<dbReference type="GO" id="GO:0044874">
    <property type="term" value="P:lipoprotein localization to outer membrane"/>
    <property type="evidence" value="ECO:0007669"/>
    <property type="project" value="UniProtKB-UniRule"/>
</dbReference>
<dbReference type="GO" id="GO:0042953">
    <property type="term" value="P:lipoprotein transport"/>
    <property type="evidence" value="ECO:0007669"/>
    <property type="project" value="InterPro"/>
</dbReference>
<dbReference type="CDD" id="cd16325">
    <property type="entry name" value="LolA"/>
    <property type="match status" value="1"/>
</dbReference>
<dbReference type="Gene3D" id="2.50.20.10">
    <property type="entry name" value="Lipoprotein localisation LolA/LolB/LppX"/>
    <property type="match status" value="1"/>
</dbReference>
<dbReference type="HAMAP" id="MF_00240">
    <property type="entry name" value="LolA"/>
    <property type="match status" value="1"/>
</dbReference>
<dbReference type="InterPro" id="IPR029046">
    <property type="entry name" value="LolA/LolB/LppX"/>
</dbReference>
<dbReference type="InterPro" id="IPR004564">
    <property type="entry name" value="OM_lipoprot_carrier_LolA-like"/>
</dbReference>
<dbReference type="InterPro" id="IPR018323">
    <property type="entry name" value="OM_lipoprot_carrier_LolA_Pbac"/>
</dbReference>
<dbReference type="NCBIfam" id="TIGR00547">
    <property type="entry name" value="lolA"/>
    <property type="match status" value="1"/>
</dbReference>
<dbReference type="PANTHER" id="PTHR35869">
    <property type="entry name" value="OUTER-MEMBRANE LIPOPROTEIN CARRIER PROTEIN"/>
    <property type="match status" value="1"/>
</dbReference>
<dbReference type="PANTHER" id="PTHR35869:SF1">
    <property type="entry name" value="OUTER-MEMBRANE LIPOPROTEIN CARRIER PROTEIN"/>
    <property type="match status" value="1"/>
</dbReference>
<dbReference type="Pfam" id="PF03548">
    <property type="entry name" value="LolA"/>
    <property type="match status" value="1"/>
</dbReference>
<dbReference type="SUPFAM" id="SSF89392">
    <property type="entry name" value="Prokaryotic lipoproteins and lipoprotein localization factors"/>
    <property type="match status" value="1"/>
</dbReference>
<protein>
    <recommendedName>
        <fullName evidence="1">Outer-membrane lipoprotein carrier protein</fullName>
    </recommendedName>
</protein>
<keyword id="KW-0143">Chaperone</keyword>
<keyword id="KW-0574">Periplasm</keyword>
<keyword id="KW-0653">Protein transport</keyword>
<keyword id="KW-0732">Signal</keyword>
<keyword id="KW-0813">Transport</keyword>